<protein>
    <recommendedName>
        <fullName evidence="1">Tol-Pal system protein TolB</fullName>
    </recommendedName>
</protein>
<gene>
    <name evidence="1" type="primary">tolB</name>
    <name type="ordered locus">Pfl01_4402</name>
</gene>
<sequence length="433" mass="47556">MRNLLRGMLVVICCMAGIVMADEKNILVTSGSDRATPIAVVPFGFQGGAVLPDDMAEIIGNDLRNSGYYSPIPKQNMISQPSQPSEIIFRDWKAVGAQYMMVGSIVPAGGRLQVQWALFNVATEQKVADGSVSGTTEQLRDMAHYISDQSFEKLTGIKGAFSTRLLYVTAERFSEKNTRYTLQRSDYDGARAVTLLQSREPILSPRFAPDGKRIAYVSFEQKRPRIFMQNIDTGRREQITNFEGLNGAPAWSPDGNRLAFVLSKDGNPDIYVMNLGSRQITRVTAGPGINTEPYWGKDGSTIYFTSDRGGKPQIYKTSAGGGGAERVTFVGNYNANPKLSADEKTLVMIHRQDGFTNFKVAAQDLQRGSVKILTDSTLDESPTVAPNGTMVIYATRQQGRGVLMLVSINGRVRLPLPTAQGEVREPSWSPYLN</sequence>
<feature type="signal peptide" evidence="1">
    <location>
        <begin position="1"/>
        <end position="21"/>
    </location>
</feature>
<feature type="chain" id="PRO_0000259071" description="Tol-Pal system protein TolB" evidence="1">
    <location>
        <begin position="22"/>
        <end position="433"/>
    </location>
</feature>
<name>TOLB_PSEPF</name>
<accession>Q3K7W5</accession>
<proteinExistence type="inferred from homology"/>
<keyword id="KW-0131">Cell cycle</keyword>
<keyword id="KW-0132">Cell division</keyword>
<keyword id="KW-0574">Periplasm</keyword>
<keyword id="KW-0732">Signal</keyword>
<organism>
    <name type="scientific">Pseudomonas fluorescens (strain Pf0-1)</name>
    <dbReference type="NCBI Taxonomy" id="205922"/>
    <lineage>
        <taxon>Bacteria</taxon>
        <taxon>Pseudomonadati</taxon>
        <taxon>Pseudomonadota</taxon>
        <taxon>Gammaproteobacteria</taxon>
        <taxon>Pseudomonadales</taxon>
        <taxon>Pseudomonadaceae</taxon>
        <taxon>Pseudomonas</taxon>
    </lineage>
</organism>
<evidence type="ECO:0000255" key="1">
    <source>
        <dbReference type="HAMAP-Rule" id="MF_00671"/>
    </source>
</evidence>
<evidence type="ECO:0000305" key="2"/>
<reference key="1">
    <citation type="journal article" date="2009" name="Genome Biol.">
        <title>Genomic and genetic analyses of diversity and plant interactions of Pseudomonas fluorescens.</title>
        <authorList>
            <person name="Silby M.W."/>
            <person name="Cerdeno-Tarraga A.M."/>
            <person name="Vernikos G.S."/>
            <person name="Giddens S.R."/>
            <person name="Jackson R.W."/>
            <person name="Preston G.M."/>
            <person name="Zhang X.-X."/>
            <person name="Moon C.D."/>
            <person name="Gehrig S.M."/>
            <person name="Godfrey S.A.C."/>
            <person name="Knight C.G."/>
            <person name="Malone J.G."/>
            <person name="Robinson Z."/>
            <person name="Spiers A.J."/>
            <person name="Harris S."/>
            <person name="Challis G.L."/>
            <person name="Yaxley A.M."/>
            <person name="Harris D."/>
            <person name="Seeger K."/>
            <person name="Murphy L."/>
            <person name="Rutter S."/>
            <person name="Squares R."/>
            <person name="Quail M.A."/>
            <person name="Saunders E."/>
            <person name="Mavromatis K."/>
            <person name="Brettin T.S."/>
            <person name="Bentley S.D."/>
            <person name="Hothersall J."/>
            <person name="Stephens E."/>
            <person name="Thomas C.M."/>
            <person name="Parkhill J."/>
            <person name="Levy S.B."/>
            <person name="Rainey P.B."/>
            <person name="Thomson N.R."/>
        </authorList>
    </citation>
    <scope>NUCLEOTIDE SEQUENCE [LARGE SCALE GENOMIC DNA]</scope>
    <source>
        <strain>Pf0-1</strain>
    </source>
</reference>
<comment type="function">
    <text evidence="1">Part of the Tol-Pal system, which plays a role in outer membrane invagination during cell division and is important for maintaining outer membrane integrity.</text>
</comment>
<comment type="subunit">
    <text evidence="1">The Tol-Pal system is composed of five core proteins: the inner membrane proteins TolA, TolQ and TolR, the periplasmic protein TolB and the outer membrane protein Pal. They form a network linking the inner and outer membranes and the peptidoglycan layer.</text>
</comment>
<comment type="subcellular location">
    <subcellularLocation>
        <location evidence="1">Periplasm</location>
    </subcellularLocation>
</comment>
<comment type="similarity">
    <text evidence="1">Belongs to the TolB family.</text>
</comment>
<comment type="sequence caution" evidence="2">
    <conflict type="erroneous initiation">
        <sequence resource="EMBL-CDS" id="ABA76139"/>
    </conflict>
</comment>
<dbReference type="EMBL" id="CP000094">
    <property type="protein sequence ID" value="ABA76139.1"/>
    <property type="status" value="ALT_INIT"/>
    <property type="molecule type" value="Genomic_DNA"/>
</dbReference>
<dbReference type="SMR" id="Q3K7W5"/>
<dbReference type="KEGG" id="pfo:Pfl01_4402"/>
<dbReference type="eggNOG" id="COG0823">
    <property type="taxonomic scope" value="Bacteria"/>
</dbReference>
<dbReference type="HOGENOM" id="CLU_047123_0_0_6"/>
<dbReference type="Proteomes" id="UP000002704">
    <property type="component" value="Chromosome"/>
</dbReference>
<dbReference type="GO" id="GO:0042597">
    <property type="term" value="C:periplasmic space"/>
    <property type="evidence" value="ECO:0007669"/>
    <property type="project" value="UniProtKB-SubCell"/>
</dbReference>
<dbReference type="GO" id="GO:0051301">
    <property type="term" value="P:cell division"/>
    <property type="evidence" value="ECO:0007669"/>
    <property type="project" value="UniProtKB-UniRule"/>
</dbReference>
<dbReference type="GO" id="GO:0017038">
    <property type="term" value="P:protein import"/>
    <property type="evidence" value="ECO:0007669"/>
    <property type="project" value="InterPro"/>
</dbReference>
<dbReference type="Gene3D" id="2.120.10.30">
    <property type="entry name" value="TolB, C-terminal domain"/>
    <property type="match status" value="1"/>
</dbReference>
<dbReference type="Gene3D" id="3.40.50.10070">
    <property type="entry name" value="TolB, N-terminal domain"/>
    <property type="match status" value="1"/>
</dbReference>
<dbReference type="HAMAP" id="MF_00671">
    <property type="entry name" value="TolB"/>
    <property type="match status" value="1"/>
</dbReference>
<dbReference type="InterPro" id="IPR011042">
    <property type="entry name" value="6-blade_b-propeller_TolB-like"/>
</dbReference>
<dbReference type="InterPro" id="IPR011659">
    <property type="entry name" value="PD40"/>
</dbReference>
<dbReference type="InterPro" id="IPR014167">
    <property type="entry name" value="Tol-Pal_TolB"/>
</dbReference>
<dbReference type="InterPro" id="IPR007195">
    <property type="entry name" value="TolB_N"/>
</dbReference>
<dbReference type="NCBIfam" id="TIGR02800">
    <property type="entry name" value="propeller_TolB"/>
    <property type="match status" value="1"/>
</dbReference>
<dbReference type="PANTHER" id="PTHR36842:SF1">
    <property type="entry name" value="PROTEIN TOLB"/>
    <property type="match status" value="1"/>
</dbReference>
<dbReference type="PANTHER" id="PTHR36842">
    <property type="entry name" value="PROTEIN TOLB HOMOLOG"/>
    <property type="match status" value="1"/>
</dbReference>
<dbReference type="Pfam" id="PF07676">
    <property type="entry name" value="PD40"/>
    <property type="match status" value="4"/>
</dbReference>
<dbReference type="Pfam" id="PF04052">
    <property type="entry name" value="TolB_N"/>
    <property type="match status" value="1"/>
</dbReference>
<dbReference type="SUPFAM" id="SSF52964">
    <property type="entry name" value="TolB, N-terminal domain"/>
    <property type="match status" value="1"/>
</dbReference>
<dbReference type="SUPFAM" id="SSF69304">
    <property type="entry name" value="Tricorn protease N-terminal domain"/>
    <property type="match status" value="1"/>
</dbReference>